<reference key="1">
    <citation type="journal article" date="2004" name="Proc. Natl. Acad. Sci. U.S.A.">
        <title>Insights into the evolution of Yersinia pestis through whole-genome comparison with Yersinia pseudotuberculosis.</title>
        <authorList>
            <person name="Chain P.S.G."/>
            <person name="Carniel E."/>
            <person name="Larimer F.W."/>
            <person name="Lamerdin J."/>
            <person name="Stoutland P.O."/>
            <person name="Regala W.M."/>
            <person name="Georgescu A.M."/>
            <person name="Vergez L.M."/>
            <person name="Land M.L."/>
            <person name="Motin V.L."/>
            <person name="Brubaker R.R."/>
            <person name="Fowler J."/>
            <person name="Hinnebusch J."/>
            <person name="Marceau M."/>
            <person name="Medigue C."/>
            <person name="Simonet M."/>
            <person name="Chenal-Francisque V."/>
            <person name="Souza B."/>
            <person name="Dacheux D."/>
            <person name="Elliott J.M."/>
            <person name="Derbise A."/>
            <person name="Hauser L.J."/>
            <person name="Garcia E."/>
        </authorList>
    </citation>
    <scope>NUCLEOTIDE SEQUENCE [LARGE SCALE GENOMIC DNA]</scope>
    <source>
        <strain>IP32953</strain>
    </source>
</reference>
<gene>
    <name type="ordered locus">YPTB3186</name>
</gene>
<evidence type="ECO:0000255" key="1">
    <source>
        <dbReference type="HAMAP-Rule" id="MF_00346"/>
    </source>
</evidence>
<feature type="chain" id="PRO_1000013058" description="UPF0149 protein YPTB3186">
    <location>
        <begin position="1"/>
        <end position="192"/>
    </location>
</feature>
<accession>Q666R1</accession>
<name>Y3186_YERPS</name>
<dbReference type="EMBL" id="BX936398">
    <property type="protein sequence ID" value="CAH22424.1"/>
    <property type="molecule type" value="Genomic_DNA"/>
</dbReference>
<dbReference type="RefSeq" id="WP_002209953.1">
    <property type="nucleotide sequence ID" value="NZ_CP009712.1"/>
</dbReference>
<dbReference type="SMR" id="Q666R1"/>
<dbReference type="KEGG" id="ypo:BZ17_3425"/>
<dbReference type="KEGG" id="yps:YPTB3186"/>
<dbReference type="PATRIC" id="fig|273123.14.peg.3594"/>
<dbReference type="Proteomes" id="UP000001011">
    <property type="component" value="Chromosome"/>
</dbReference>
<dbReference type="GO" id="GO:0005829">
    <property type="term" value="C:cytosol"/>
    <property type="evidence" value="ECO:0007669"/>
    <property type="project" value="TreeGrafter"/>
</dbReference>
<dbReference type="FunFam" id="1.20.120.740:FF:000001">
    <property type="entry name" value="UPF0149 protein YgfB"/>
    <property type="match status" value="1"/>
</dbReference>
<dbReference type="Gene3D" id="1.20.120.740">
    <property type="entry name" value="YgfB uncharacterised protein family UPF0149, PF03695"/>
    <property type="match status" value="1"/>
</dbReference>
<dbReference type="HAMAP" id="MF_00346">
    <property type="entry name" value="UPF0149"/>
    <property type="match status" value="1"/>
</dbReference>
<dbReference type="InterPro" id="IPR011978">
    <property type="entry name" value="YgfB-like"/>
</dbReference>
<dbReference type="InterPro" id="IPR036255">
    <property type="entry name" value="YgfB-like_sf"/>
</dbReference>
<dbReference type="NCBIfam" id="NF002477">
    <property type="entry name" value="PRK01736.1"/>
    <property type="match status" value="1"/>
</dbReference>
<dbReference type="NCBIfam" id="TIGR02292">
    <property type="entry name" value="ygfB_yecA"/>
    <property type="match status" value="1"/>
</dbReference>
<dbReference type="PANTHER" id="PTHR37528">
    <property type="entry name" value="UPF0149 PROTEIN YGFB"/>
    <property type="match status" value="1"/>
</dbReference>
<dbReference type="PANTHER" id="PTHR37528:SF1">
    <property type="entry name" value="UPF0149 PROTEIN YGFB"/>
    <property type="match status" value="1"/>
</dbReference>
<dbReference type="Pfam" id="PF03695">
    <property type="entry name" value="UPF0149"/>
    <property type="match status" value="1"/>
</dbReference>
<dbReference type="SUPFAM" id="SSF101327">
    <property type="entry name" value="YgfB-like"/>
    <property type="match status" value="1"/>
</dbReference>
<organism>
    <name type="scientific">Yersinia pseudotuberculosis serotype I (strain IP32953)</name>
    <dbReference type="NCBI Taxonomy" id="273123"/>
    <lineage>
        <taxon>Bacteria</taxon>
        <taxon>Pseudomonadati</taxon>
        <taxon>Pseudomonadota</taxon>
        <taxon>Gammaproteobacteria</taxon>
        <taxon>Enterobacterales</taxon>
        <taxon>Yersiniaceae</taxon>
        <taxon>Yersinia</taxon>
    </lineage>
</organism>
<proteinExistence type="inferred from homology"/>
<protein>
    <recommendedName>
        <fullName evidence="1">UPF0149 protein YPTB3186</fullName>
    </recommendedName>
</protein>
<comment type="similarity">
    <text evidence="1">Belongs to the UPF0149 family.</text>
</comment>
<sequence>MSIENTLPTYPSLALALSQQAVALTPAEMHGLISGMLCGGSKDNGWQTLVHDLTNEGVAFPQALSLPLQQLHEATQEALENEGFMFQLLIPEGEDVTVFDRADALSGWVNHFLLGLGMLQPKLAQVKDEVGEAIDDLRNIAQLGYDEDEDQEELAQSLEEVVEYVRVAAILCHIEFTQQKPTAPEMHKPTLH</sequence>